<dbReference type="EC" id="1.14.17.4"/>
<dbReference type="EMBL" id="L21976">
    <property type="protein sequence ID" value="AAC37381.1"/>
    <property type="molecule type" value="Unassigned_DNA"/>
</dbReference>
<dbReference type="PIR" id="S42560">
    <property type="entry name" value="S42560"/>
</dbReference>
<dbReference type="PDB" id="1W9Y">
    <property type="method" value="X-ray"/>
    <property type="resolution" value="2.10 A"/>
    <property type="chains" value="A=1-319"/>
</dbReference>
<dbReference type="PDB" id="1WA6">
    <property type="method" value="X-ray"/>
    <property type="resolution" value="2.55 A"/>
    <property type="chains" value="X=1-319"/>
</dbReference>
<dbReference type="PDB" id="5TCV">
    <property type="method" value="X-ray"/>
    <property type="resolution" value="2.60 A"/>
    <property type="chains" value="A=1-319"/>
</dbReference>
<dbReference type="PDB" id="5TCW">
    <property type="method" value="X-ray"/>
    <property type="resolution" value="2.70 A"/>
    <property type="chains" value="A=1-319"/>
</dbReference>
<dbReference type="PDBsum" id="1W9Y"/>
<dbReference type="PDBsum" id="1WA6"/>
<dbReference type="PDBsum" id="5TCV"/>
<dbReference type="PDBsum" id="5TCW"/>
<dbReference type="SMR" id="Q08506"/>
<dbReference type="UniPathway" id="UPA00384">
    <property type="reaction ID" value="UER00563"/>
</dbReference>
<dbReference type="EvolutionaryTrace" id="Q08506"/>
<dbReference type="GO" id="GO:0009815">
    <property type="term" value="F:1-aminocyclopropane-1-carboxylate oxidase activity"/>
    <property type="evidence" value="ECO:0007669"/>
    <property type="project" value="UniProtKB-EC"/>
</dbReference>
<dbReference type="GO" id="GO:0016706">
    <property type="term" value="F:2-oxoglutarate-dependent dioxygenase activity"/>
    <property type="evidence" value="ECO:0007669"/>
    <property type="project" value="UniProtKB-ARBA"/>
</dbReference>
<dbReference type="GO" id="GO:0031418">
    <property type="term" value="F:L-ascorbic acid binding"/>
    <property type="evidence" value="ECO:0007669"/>
    <property type="project" value="UniProtKB-KW"/>
</dbReference>
<dbReference type="GO" id="GO:0046872">
    <property type="term" value="F:metal ion binding"/>
    <property type="evidence" value="ECO:0007669"/>
    <property type="project" value="UniProtKB-KW"/>
</dbReference>
<dbReference type="GO" id="GO:0009805">
    <property type="term" value="P:coumarin biosynthetic process"/>
    <property type="evidence" value="ECO:0007669"/>
    <property type="project" value="UniProtKB-ARBA"/>
</dbReference>
<dbReference type="GO" id="GO:0009693">
    <property type="term" value="P:ethylene biosynthetic process"/>
    <property type="evidence" value="ECO:0007669"/>
    <property type="project" value="UniProtKB-UniPathway"/>
</dbReference>
<dbReference type="GO" id="GO:0002238">
    <property type="term" value="P:response to molecule of fungal origin"/>
    <property type="evidence" value="ECO:0007669"/>
    <property type="project" value="UniProtKB-ARBA"/>
</dbReference>
<dbReference type="FunFam" id="2.60.120.330:FF:000002">
    <property type="entry name" value="1-aminocyclopropane-1-carboxylate oxidase 1"/>
    <property type="match status" value="1"/>
</dbReference>
<dbReference type="Gene3D" id="2.60.120.330">
    <property type="entry name" value="B-lactam Antibiotic, Isopenicillin N Synthase, Chain"/>
    <property type="match status" value="1"/>
</dbReference>
<dbReference type="InterPro" id="IPR026992">
    <property type="entry name" value="DIOX_N"/>
</dbReference>
<dbReference type="InterPro" id="IPR044861">
    <property type="entry name" value="IPNS-like_FE2OG_OXY"/>
</dbReference>
<dbReference type="InterPro" id="IPR027443">
    <property type="entry name" value="IPNS-like_sf"/>
</dbReference>
<dbReference type="InterPro" id="IPR005123">
    <property type="entry name" value="Oxoglu/Fe-dep_dioxygenase_dom"/>
</dbReference>
<dbReference type="InterPro" id="IPR050295">
    <property type="entry name" value="Plant_2OG-oxidoreductases"/>
</dbReference>
<dbReference type="PANTHER" id="PTHR47991">
    <property type="entry name" value="OXOGLUTARATE/IRON-DEPENDENT DIOXYGENASE"/>
    <property type="match status" value="1"/>
</dbReference>
<dbReference type="Pfam" id="PF03171">
    <property type="entry name" value="2OG-FeII_Oxy"/>
    <property type="match status" value="1"/>
</dbReference>
<dbReference type="Pfam" id="PF14226">
    <property type="entry name" value="DIOX_N"/>
    <property type="match status" value="1"/>
</dbReference>
<dbReference type="SUPFAM" id="SSF51197">
    <property type="entry name" value="Clavaminate synthase-like"/>
    <property type="match status" value="1"/>
</dbReference>
<dbReference type="PROSITE" id="PS51471">
    <property type="entry name" value="FE2OG_OXY"/>
    <property type="match status" value="1"/>
</dbReference>
<comment type="catalytic activity">
    <reaction>
        <text>1-aminocyclopropane-1-carboxylate + L-ascorbate + O2 = ethene + L-dehydroascorbate + hydrogen cyanide + CO2 + 2 H2O</text>
        <dbReference type="Rhea" id="RHEA:23640"/>
        <dbReference type="ChEBI" id="CHEBI:15377"/>
        <dbReference type="ChEBI" id="CHEBI:15379"/>
        <dbReference type="ChEBI" id="CHEBI:16526"/>
        <dbReference type="ChEBI" id="CHEBI:18153"/>
        <dbReference type="ChEBI" id="CHEBI:18407"/>
        <dbReference type="ChEBI" id="CHEBI:38290"/>
        <dbReference type="ChEBI" id="CHEBI:58360"/>
        <dbReference type="ChEBI" id="CHEBI:58539"/>
        <dbReference type="EC" id="1.14.17.4"/>
    </reaction>
</comment>
<comment type="cofactor">
    <cofactor evidence="2">
        <name>Fe cation</name>
        <dbReference type="ChEBI" id="CHEBI:24875"/>
    </cofactor>
</comment>
<comment type="pathway">
    <text>Alkene biosynthesis; ethylene biosynthesis via S-adenosyl-L-methionine; ethylene from S-adenosyl-L-methionine: step 2/2.</text>
</comment>
<comment type="similarity">
    <text evidence="3">Belongs to the iron/ascorbate-dependent oxidoreductase family.</text>
</comment>
<accession>Q08506</accession>
<feature type="chain" id="PRO_0000067271" description="1-aminocyclopropane-1-carboxylate oxidase 1">
    <location>
        <begin position="1"/>
        <end position="319"/>
    </location>
</feature>
<feature type="domain" description="Fe2OG dioxygenase" evidence="1">
    <location>
        <begin position="153"/>
        <end position="253"/>
    </location>
</feature>
<feature type="binding site">
    <location>
        <position position="177"/>
    </location>
    <ligand>
        <name>Fe cation</name>
        <dbReference type="ChEBI" id="CHEBI:24875"/>
    </ligand>
</feature>
<feature type="binding site">
    <location>
        <position position="179"/>
    </location>
    <ligand>
        <name>Fe cation</name>
        <dbReference type="ChEBI" id="CHEBI:24875"/>
    </ligand>
</feature>
<feature type="binding site">
    <location>
        <position position="234"/>
    </location>
    <ligand>
        <name>Fe cation</name>
        <dbReference type="ChEBI" id="CHEBI:24875"/>
    </ligand>
</feature>
<feature type="strand" evidence="4">
    <location>
        <begin position="6"/>
        <end position="8"/>
    </location>
</feature>
<feature type="helix" evidence="4">
    <location>
        <begin position="9"/>
        <end position="13"/>
    </location>
</feature>
<feature type="helix" evidence="4">
    <location>
        <begin position="17"/>
        <end position="30"/>
    </location>
</feature>
<feature type="strand" evidence="4">
    <location>
        <begin position="32"/>
        <end position="38"/>
    </location>
</feature>
<feature type="helix" evidence="4">
    <location>
        <begin position="43"/>
        <end position="74"/>
    </location>
</feature>
<feature type="helix" evidence="4">
    <location>
        <begin position="81"/>
        <end position="83"/>
    </location>
</feature>
<feature type="strand" evidence="4">
    <location>
        <begin position="88"/>
        <end position="96"/>
    </location>
</feature>
<feature type="helix" evidence="4">
    <location>
        <begin position="99"/>
        <end position="102"/>
    </location>
</feature>
<feature type="strand" evidence="5">
    <location>
        <begin position="103"/>
        <end position="105"/>
    </location>
</feature>
<feature type="helix" evidence="4">
    <location>
        <begin position="108"/>
        <end position="136"/>
    </location>
</feature>
<feature type="helix" evidence="4">
    <location>
        <begin position="142"/>
        <end position="148"/>
    </location>
</feature>
<feature type="turn" evidence="4">
    <location>
        <begin position="149"/>
        <end position="151"/>
    </location>
</feature>
<feature type="strand" evidence="4">
    <location>
        <begin position="154"/>
        <end position="161"/>
    </location>
</feature>
<feature type="helix" evidence="4">
    <location>
        <begin position="168"/>
        <end position="171"/>
    </location>
</feature>
<feature type="strand" evidence="4">
    <location>
        <begin position="180"/>
        <end position="191"/>
    </location>
</feature>
<feature type="strand" evidence="4">
    <location>
        <begin position="195"/>
        <end position="199"/>
    </location>
</feature>
<feature type="strand" evidence="4">
    <location>
        <begin position="202"/>
        <end position="205"/>
    </location>
</feature>
<feature type="strand" evidence="4">
    <location>
        <begin position="213"/>
        <end position="217"/>
    </location>
</feature>
<feature type="helix" evidence="4">
    <location>
        <begin position="219"/>
        <end position="224"/>
    </location>
</feature>
<feature type="turn" evidence="4">
    <location>
        <begin position="225"/>
        <end position="227"/>
    </location>
</feature>
<feature type="strand" evidence="4">
    <location>
        <begin position="234"/>
        <end position="236"/>
    </location>
</feature>
<feature type="strand" evidence="4">
    <location>
        <begin position="240"/>
        <end position="242"/>
    </location>
</feature>
<feature type="strand" evidence="4">
    <location>
        <begin position="245"/>
        <end position="252"/>
    </location>
</feature>
<feature type="helix" evidence="4">
    <location>
        <begin position="263"/>
        <end position="265"/>
    </location>
</feature>
<feature type="helix" evidence="4">
    <location>
        <begin position="282"/>
        <end position="287"/>
    </location>
</feature>
<feature type="turn" evidence="4">
    <location>
        <begin position="288"/>
        <end position="293"/>
    </location>
</feature>
<feature type="helix" evidence="4">
    <location>
        <begin position="297"/>
        <end position="306"/>
    </location>
</feature>
<evidence type="ECO:0000255" key="1">
    <source>
        <dbReference type="PROSITE-ProRule" id="PRU00805"/>
    </source>
</evidence>
<evidence type="ECO:0000269" key="2">
    <source>
    </source>
</evidence>
<evidence type="ECO:0000305" key="3"/>
<evidence type="ECO:0007829" key="4">
    <source>
        <dbReference type="PDB" id="1W9Y"/>
    </source>
</evidence>
<evidence type="ECO:0007829" key="5">
    <source>
        <dbReference type="PDB" id="5TCW"/>
    </source>
</evidence>
<keyword id="KW-0002">3D-structure</keyword>
<keyword id="KW-0266">Ethylene biosynthesis</keyword>
<keyword id="KW-0408">Iron</keyword>
<keyword id="KW-0479">Metal-binding</keyword>
<keyword id="KW-0560">Oxidoreductase</keyword>
<keyword id="KW-0847">Vitamin C</keyword>
<protein>
    <recommendedName>
        <fullName>1-aminocyclopropane-1-carboxylate oxidase 1</fullName>
        <shortName>ACC oxidase 1</shortName>
        <shortName>ACCO</shortName>
        <ecNumber>1.14.17.4</ecNumber>
    </recommendedName>
    <alternativeName>
        <fullName>Ethylene-forming enzyme</fullName>
        <shortName>EFE</shortName>
    </alternativeName>
</protein>
<proteinExistence type="evidence at protein level"/>
<reference key="1">
    <citation type="journal article" date="1993" name="Plant Mol. Biol.">
        <title>Organization and structure of the 1-aminocyclopropane-1-carboxylate oxidase gene family from Petunia hybrida.</title>
        <authorList>
            <person name="Tang X."/>
            <person name="Wang H."/>
            <person name="Brandt A.S."/>
            <person name="Woodson W.R."/>
        </authorList>
    </citation>
    <scope>NUCLEOTIDE SEQUENCE</scope>
</reference>
<reference key="2">
    <citation type="journal article" date="2004" name="Chem. Biol.">
        <title>Crystal structure and mechanistic implications of 1-aminocyclopropane-1-carboxylic acid oxidase -- the ethylene-forming enzyme.</title>
        <authorList>
            <person name="Zhang Z."/>
            <person name="Ren J.-S."/>
            <person name="Clifton I.J."/>
            <person name="Schofield C.J."/>
        </authorList>
    </citation>
    <scope>X-RAY CRYSTALLOGRAPHY (2.1 ANGSTROMS)</scope>
    <scope>COFACTOR</scope>
</reference>
<sequence>MENFPIISLDKVNGVERAATMEMIKDACENWGFFELVNHGIPREVMDTVEKMTKGHYKKCMEQRFKELVASKALEGVQAEVTDMDWESTFFLKHLPISNISEVPDLDEEYREVMRDFAKRLEKLAEELLDLLCENLGLEKGYLKNAFYGSKGPNFGTKVSNYPPCPKPDLIKGLRAHTDAGGIILLFQDDKVSGLQLLKDGQWIDVPPMRHSIVVNLGDQLEVITNGKYKSVMHRVIAQKDGARMSLASFYNPGSDAVIYPAPALVEKEAEENKQVYPKFVFDDYMKLYAGLKFQAKEPRFEAMKAMETDVKMDPIATV</sequence>
<organism>
    <name type="scientific">Petunia hybrida</name>
    <name type="common">Petunia</name>
    <dbReference type="NCBI Taxonomy" id="4102"/>
    <lineage>
        <taxon>Eukaryota</taxon>
        <taxon>Viridiplantae</taxon>
        <taxon>Streptophyta</taxon>
        <taxon>Embryophyta</taxon>
        <taxon>Tracheophyta</taxon>
        <taxon>Spermatophyta</taxon>
        <taxon>Magnoliopsida</taxon>
        <taxon>eudicotyledons</taxon>
        <taxon>Gunneridae</taxon>
        <taxon>Pentapetalae</taxon>
        <taxon>asterids</taxon>
        <taxon>lamiids</taxon>
        <taxon>Solanales</taxon>
        <taxon>Solanaceae</taxon>
        <taxon>Petunioideae</taxon>
        <taxon>Petunia</taxon>
    </lineage>
</organism>
<name>ACCO1_PETHY</name>
<gene>
    <name type="primary">ACO1</name>
</gene>